<feature type="chain" id="PRO_0000123551" description="Eukaryotic translation initiation factor 3 subunit K">
    <location>
        <begin position="1"/>
        <end position="226"/>
    </location>
</feature>
<feature type="domain" description="PCI" evidence="2">
    <location>
        <begin position="44"/>
        <end position="202"/>
    </location>
</feature>
<protein>
    <recommendedName>
        <fullName evidence="1">Eukaryotic translation initiation factor 3 subunit K</fullName>
        <shortName evidence="1">eIF3k</shortName>
    </recommendedName>
    <alternativeName>
        <fullName evidence="1">eIF-3 p25</fullName>
    </alternativeName>
</protein>
<comment type="function">
    <text evidence="1">Component of the eukaryotic translation initiation factor 3 (eIF-3) complex, which is involved in protein synthesis of a specialized repertoire of mRNAs and, together with other initiation factors, stimulates binding of mRNA and methionyl-tRNAi to the 40S ribosome. The eIF-3 complex specifically targets and initiates translation of a subset of mRNAs involved in cell proliferation.</text>
</comment>
<comment type="subunit">
    <text evidence="1">Component of the eukaryotic translation initiation factor 3 (eIF-3) complex.</text>
</comment>
<comment type="subcellular location">
    <subcellularLocation>
        <location evidence="1">Cytoplasm</location>
    </subcellularLocation>
</comment>
<comment type="similarity">
    <text evidence="1">Belongs to the eIF-3 subunit K family.</text>
</comment>
<organism>
    <name type="scientific">Arabidopsis thaliana</name>
    <name type="common">Mouse-ear cress</name>
    <dbReference type="NCBI Taxonomy" id="3702"/>
    <lineage>
        <taxon>Eukaryota</taxon>
        <taxon>Viridiplantae</taxon>
        <taxon>Streptophyta</taxon>
        <taxon>Embryophyta</taxon>
        <taxon>Tracheophyta</taxon>
        <taxon>Spermatophyta</taxon>
        <taxon>Magnoliopsida</taxon>
        <taxon>eudicotyledons</taxon>
        <taxon>Gunneridae</taxon>
        <taxon>Pentapetalae</taxon>
        <taxon>rosids</taxon>
        <taxon>malvids</taxon>
        <taxon>Brassicales</taxon>
        <taxon>Brassicaceae</taxon>
        <taxon>Camelineae</taxon>
        <taxon>Arabidopsis</taxon>
    </lineage>
</organism>
<gene>
    <name type="primary">TIF3K1</name>
    <name type="ordered locus">At4g33250</name>
    <name type="ORF">F17M5.10</name>
</gene>
<keyword id="KW-0963">Cytoplasm</keyword>
<keyword id="KW-0396">Initiation factor</keyword>
<keyword id="KW-0648">Protein biosynthesis</keyword>
<keyword id="KW-1185">Reference proteome</keyword>
<dbReference type="EMBL" id="AF291713">
    <property type="protein sequence ID" value="AAG53637.1"/>
    <property type="molecule type" value="mRNA"/>
</dbReference>
<dbReference type="EMBL" id="AL035678">
    <property type="protein sequence ID" value="CAB38783.1"/>
    <property type="molecule type" value="Genomic_DNA"/>
</dbReference>
<dbReference type="EMBL" id="AL161583">
    <property type="protein sequence ID" value="CAB80042.1"/>
    <property type="molecule type" value="Genomic_DNA"/>
</dbReference>
<dbReference type="EMBL" id="CP002687">
    <property type="protein sequence ID" value="AEE86197.1"/>
    <property type="molecule type" value="Genomic_DNA"/>
</dbReference>
<dbReference type="EMBL" id="AY050928">
    <property type="protein sequence ID" value="AAK93605.1"/>
    <property type="molecule type" value="mRNA"/>
</dbReference>
<dbReference type="EMBL" id="AY037191">
    <property type="protein sequence ID" value="AAK59776.1"/>
    <property type="molecule type" value="mRNA"/>
</dbReference>
<dbReference type="EMBL" id="AY091670">
    <property type="protein sequence ID" value="AAM10269.1"/>
    <property type="molecule type" value="mRNA"/>
</dbReference>
<dbReference type="EMBL" id="AY091164">
    <property type="protein sequence ID" value="AAM14103.1"/>
    <property type="molecule type" value="mRNA"/>
</dbReference>
<dbReference type="PIR" id="T05976">
    <property type="entry name" value="T05976"/>
</dbReference>
<dbReference type="SMR" id="Q9SZA3"/>
<dbReference type="BioGRID" id="14746">
    <property type="interactions" value="21"/>
</dbReference>
<dbReference type="FunCoup" id="Q9SZA3">
    <property type="interactions" value="4152"/>
</dbReference>
<dbReference type="STRING" id="3702.Q9SZA3"/>
<dbReference type="PaxDb" id="3702-AT4G33250.1"/>
<dbReference type="ProteomicsDB" id="220407"/>
<dbReference type="DNASU" id="829461"/>
<dbReference type="EnsemblPlants" id="AT4G33250.1">
    <property type="protein sequence ID" value="AT4G33250.1"/>
    <property type="gene ID" value="AT4G33250"/>
</dbReference>
<dbReference type="GeneID" id="829461"/>
<dbReference type="Gramene" id="AT4G33250.1">
    <property type="protein sequence ID" value="AT4G33250.1"/>
    <property type="gene ID" value="AT4G33250"/>
</dbReference>
<dbReference type="KEGG" id="ath:AT4G33250"/>
<dbReference type="Araport" id="AT4G33250"/>
<dbReference type="TAIR" id="AT4G33250">
    <property type="gene designation" value="EIF3K"/>
</dbReference>
<dbReference type="eggNOG" id="KOG3252">
    <property type="taxonomic scope" value="Eukaryota"/>
</dbReference>
<dbReference type="HOGENOM" id="CLU_076723_2_0_1"/>
<dbReference type="InParanoid" id="Q9SZA3"/>
<dbReference type="OMA" id="GDDLCAD"/>
<dbReference type="OrthoDB" id="337745at2759"/>
<dbReference type="PhylomeDB" id="Q9SZA3"/>
<dbReference type="PRO" id="PR:Q9SZA3"/>
<dbReference type="Proteomes" id="UP000006548">
    <property type="component" value="Chromosome 4"/>
</dbReference>
<dbReference type="ExpressionAtlas" id="Q9SZA3">
    <property type="expression patterns" value="baseline and differential"/>
</dbReference>
<dbReference type="GO" id="GO:0016282">
    <property type="term" value="C:eukaryotic 43S preinitiation complex"/>
    <property type="evidence" value="ECO:0007669"/>
    <property type="project" value="UniProtKB-UniRule"/>
</dbReference>
<dbReference type="GO" id="GO:0033290">
    <property type="term" value="C:eukaryotic 48S preinitiation complex"/>
    <property type="evidence" value="ECO:0007669"/>
    <property type="project" value="UniProtKB-UniRule"/>
</dbReference>
<dbReference type="GO" id="GO:0005852">
    <property type="term" value="C:eukaryotic translation initiation factor 3 complex"/>
    <property type="evidence" value="ECO:0000250"/>
    <property type="project" value="TAIR"/>
</dbReference>
<dbReference type="GO" id="GO:0005886">
    <property type="term" value="C:plasma membrane"/>
    <property type="evidence" value="ECO:0007005"/>
    <property type="project" value="TAIR"/>
</dbReference>
<dbReference type="GO" id="GO:0043022">
    <property type="term" value="F:ribosome binding"/>
    <property type="evidence" value="ECO:0007669"/>
    <property type="project" value="InterPro"/>
</dbReference>
<dbReference type="GO" id="GO:0003723">
    <property type="term" value="F:RNA binding"/>
    <property type="evidence" value="ECO:0007669"/>
    <property type="project" value="UniProtKB-UniRule"/>
</dbReference>
<dbReference type="GO" id="GO:0003743">
    <property type="term" value="F:translation initiation factor activity"/>
    <property type="evidence" value="ECO:0007669"/>
    <property type="project" value="UniProtKB-UniRule"/>
</dbReference>
<dbReference type="GO" id="GO:0001732">
    <property type="term" value="P:formation of cytoplasmic translation initiation complex"/>
    <property type="evidence" value="ECO:0007669"/>
    <property type="project" value="UniProtKB-UniRule"/>
</dbReference>
<dbReference type="GO" id="GO:0006446">
    <property type="term" value="P:regulation of translational initiation"/>
    <property type="evidence" value="ECO:0007669"/>
    <property type="project" value="InterPro"/>
</dbReference>
<dbReference type="FunFam" id="1.10.10.10:FF:000378">
    <property type="entry name" value="Eukaryotic translation initiation factor 3 subunit K"/>
    <property type="match status" value="1"/>
</dbReference>
<dbReference type="FunFam" id="1.25.40.250:FF:000002">
    <property type="entry name" value="Eukaryotic translation initiation factor 3 subunit K"/>
    <property type="match status" value="1"/>
</dbReference>
<dbReference type="Gene3D" id="1.25.40.250">
    <property type="entry name" value="ARM repeat, domain 1"/>
    <property type="match status" value="1"/>
</dbReference>
<dbReference type="Gene3D" id="1.10.10.10">
    <property type="entry name" value="Winged helix-like DNA-binding domain superfamily/Winged helix DNA-binding domain"/>
    <property type="match status" value="1"/>
</dbReference>
<dbReference type="HAMAP" id="MF_03010">
    <property type="entry name" value="eIF3k"/>
    <property type="match status" value="1"/>
</dbReference>
<dbReference type="InterPro" id="IPR016024">
    <property type="entry name" value="ARM-type_fold"/>
</dbReference>
<dbReference type="InterPro" id="IPR033464">
    <property type="entry name" value="CSN8_PSD8_EIF3K"/>
</dbReference>
<dbReference type="InterPro" id="IPR009374">
    <property type="entry name" value="eIF3k"/>
</dbReference>
<dbReference type="InterPro" id="IPR000717">
    <property type="entry name" value="PCI_dom"/>
</dbReference>
<dbReference type="InterPro" id="IPR016020">
    <property type="entry name" value="Transl_init_fac_sub12_N_euk"/>
</dbReference>
<dbReference type="InterPro" id="IPR036388">
    <property type="entry name" value="WH-like_DNA-bd_sf"/>
</dbReference>
<dbReference type="InterPro" id="IPR036390">
    <property type="entry name" value="WH_DNA-bd_sf"/>
</dbReference>
<dbReference type="PANTHER" id="PTHR13022">
    <property type="entry name" value="EUKARYOTIC TRANSLATION INITIATION FACTOR 3 SUBUNIT 11"/>
    <property type="match status" value="1"/>
</dbReference>
<dbReference type="PANTHER" id="PTHR13022:SF0">
    <property type="entry name" value="EUKARYOTIC TRANSLATION INITIATION FACTOR 3 SUBUNIT K"/>
    <property type="match status" value="1"/>
</dbReference>
<dbReference type="Pfam" id="PF10075">
    <property type="entry name" value="CSN8_PSD8_EIF3K"/>
    <property type="match status" value="1"/>
</dbReference>
<dbReference type="SUPFAM" id="SSF48371">
    <property type="entry name" value="ARM repeat"/>
    <property type="match status" value="1"/>
</dbReference>
<dbReference type="SUPFAM" id="SSF46785">
    <property type="entry name" value="Winged helix' DNA-binding domain"/>
    <property type="match status" value="1"/>
</dbReference>
<dbReference type="PROSITE" id="PS50250">
    <property type="entry name" value="PCI"/>
    <property type="match status" value="1"/>
</dbReference>
<reference key="1">
    <citation type="journal article" date="2001" name="J. Biol. Chem.">
        <title>Plant initiation factor 3 subunit composition resembles mammalian initiation factor 3 and has a novel subunit.</title>
        <authorList>
            <person name="Burks E.A."/>
            <person name="Bezerra P.P."/>
            <person name="Le H."/>
            <person name="Gallie D.R."/>
            <person name="Browning K.S."/>
        </authorList>
    </citation>
    <scope>NUCLEOTIDE SEQUENCE [MRNA]</scope>
</reference>
<reference key="2">
    <citation type="journal article" date="1999" name="Nature">
        <title>Sequence and analysis of chromosome 4 of the plant Arabidopsis thaliana.</title>
        <authorList>
            <person name="Mayer K.F.X."/>
            <person name="Schueller C."/>
            <person name="Wambutt R."/>
            <person name="Murphy G."/>
            <person name="Volckaert G."/>
            <person name="Pohl T."/>
            <person name="Duesterhoeft A."/>
            <person name="Stiekema W."/>
            <person name="Entian K.-D."/>
            <person name="Terryn N."/>
            <person name="Harris B."/>
            <person name="Ansorge W."/>
            <person name="Brandt P."/>
            <person name="Grivell L.A."/>
            <person name="Rieger M."/>
            <person name="Weichselgartner M."/>
            <person name="de Simone V."/>
            <person name="Obermaier B."/>
            <person name="Mache R."/>
            <person name="Mueller M."/>
            <person name="Kreis M."/>
            <person name="Delseny M."/>
            <person name="Puigdomenech P."/>
            <person name="Watson M."/>
            <person name="Schmidtheini T."/>
            <person name="Reichert B."/>
            <person name="Portetelle D."/>
            <person name="Perez-Alonso M."/>
            <person name="Boutry M."/>
            <person name="Bancroft I."/>
            <person name="Vos P."/>
            <person name="Hoheisel J."/>
            <person name="Zimmermann W."/>
            <person name="Wedler H."/>
            <person name="Ridley P."/>
            <person name="Langham S.-A."/>
            <person name="McCullagh B."/>
            <person name="Bilham L."/>
            <person name="Robben J."/>
            <person name="van der Schueren J."/>
            <person name="Grymonprez B."/>
            <person name="Chuang Y.-J."/>
            <person name="Vandenbussche F."/>
            <person name="Braeken M."/>
            <person name="Weltjens I."/>
            <person name="Voet M."/>
            <person name="Bastiaens I."/>
            <person name="Aert R."/>
            <person name="Defoor E."/>
            <person name="Weitzenegger T."/>
            <person name="Bothe G."/>
            <person name="Ramsperger U."/>
            <person name="Hilbert H."/>
            <person name="Braun M."/>
            <person name="Holzer E."/>
            <person name="Brandt A."/>
            <person name="Peters S."/>
            <person name="van Staveren M."/>
            <person name="Dirkse W."/>
            <person name="Mooijman P."/>
            <person name="Klein Lankhorst R."/>
            <person name="Rose M."/>
            <person name="Hauf J."/>
            <person name="Koetter P."/>
            <person name="Berneiser S."/>
            <person name="Hempel S."/>
            <person name="Feldpausch M."/>
            <person name="Lamberth S."/>
            <person name="Van den Daele H."/>
            <person name="De Keyser A."/>
            <person name="Buysshaert C."/>
            <person name="Gielen J."/>
            <person name="Villarroel R."/>
            <person name="De Clercq R."/>
            <person name="van Montagu M."/>
            <person name="Rogers J."/>
            <person name="Cronin A."/>
            <person name="Quail M.A."/>
            <person name="Bray-Allen S."/>
            <person name="Clark L."/>
            <person name="Doggett J."/>
            <person name="Hall S."/>
            <person name="Kay M."/>
            <person name="Lennard N."/>
            <person name="McLay K."/>
            <person name="Mayes R."/>
            <person name="Pettett A."/>
            <person name="Rajandream M.A."/>
            <person name="Lyne M."/>
            <person name="Benes V."/>
            <person name="Rechmann S."/>
            <person name="Borkova D."/>
            <person name="Bloecker H."/>
            <person name="Scharfe M."/>
            <person name="Grimm M."/>
            <person name="Loehnert T.-H."/>
            <person name="Dose S."/>
            <person name="de Haan M."/>
            <person name="Maarse A.C."/>
            <person name="Schaefer M."/>
            <person name="Mueller-Auer S."/>
            <person name="Gabel C."/>
            <person name="Fuchs M."/>
            <person name="Fartmann B."/>
            <person name="Granderath K."/>
            <person name="Dauner D."/>
            <person name="Herzl A."/>
            <person name="Neumann S."/>
            <person name="Argiriou A."/>
            <person name="Vitale D."/>
            <person name="Liguori R."/>
            <person name="Piravandi E."/>
            <person name="Massenet O."/>
            <person name="Quigley F."/>
            <person name="Clabauld G."/>
            <person name="Muendlein A."/>
            <person name="Felber R."/>
            <person name="Schnabl S."/>
            <person name="Hiller R."/>
            <person name="Schmidt W."/>
            <person name="Lecharny A."/>
            <person name="Aubourg S."/>
            <person name="Chefdor F."/>
            <person name="Cooke R."/>
            <person name="Berger C."/>
            <person name="Monfort A."/>
            <person name="Casacuberta E."/>
            <person name="Gibbons T."/>
            <person name="Weber N."/>
            <person name="Vandenbol M."/>
            <person name="Bargues M."/>
            <person name="Terol J."/>
            <person name="Torres A."/>
            <person name="Perez-Perez A."/>
            <person name="Purnelle B."/>
            <person name="Bent E."/>
            <person name="Johnson S."/>
            <person name="Tacon D."/>
            <person name="Jesse T."/>
            <person name="Heijnen L."/>
            <person name="Schwarz S."/>
            <person name="Scholler P."/>
            <person name="Heber S."/>
            <person name="Francs P."/>
            <person name="Bielke C."/>
            <person name="Frishman D."/>
            <person name="Haase D."/>
            <person name="Lemcke K."/>
            <person name="Mewes H.-W."/>
            <person name="Stocker S."/>
            <person name="Zaccaria P."/>
            <person name="Bevan M."/>
            <person name="Wilson R.K."/>
            <person name="de la Bastide M."/>
            <person name="Habermann K."/>
            <person name="Parnell L."/>
            <person name="Dedhia N."/>
            <person name="Gnoj L."/>
            <person name="Schutz K."/>
            <person name="Huang E."/>
            <person name="Spiegel L."/>
            <person name="Sekhon M."/>
            <person name="Murray J."/>
            <person name="Sheet P."/>
            <person name="Cordes M."/>
            <person name="Abu-Threideh J."/>
            <person name="Stoneking T."/>
            <person name="Kalicki J."/>
            <person name="Graves T."/>
            <person name="Harmon G."/>
            <person name="Edwards J."/>
            <person name="Latreille P."/>
            <person name="Courtney L."/>
            <person name="Cloud J."/>
            <person name="Abbott A."/>
            <person name="Scott K."/>
            <person name="Johnson D."/>
            <person name="Minx P."/>
            <person name="Bentley D."/>
            <person name="Fulton B."/>
            <person name="Miller N."/>
            <person name="Greco T."/>
            <person name="Kemp K."/>
            <person name="Kramer J."/>
            <person name="Fulton L."/>
            <person name="Mardis E."/>
            <person name="Dante M."/>
            <person name="Pepin K."/>
            <person name="Hillier L.W."/>
            <person name="Nelson J."/>
            <person name="Spieth J."/>
            <person name="Ryan E."/>
            <person name="Andrews S."/>
            <person name="Geisel C."/>
            <person name="Layman D."/>
            <person name="Du H."/>
            <person name="Ali J."/>
            <person name="Berghoff A."/>
            <person name="Jones K."/>
            <person name="Drone K."/>
            <person name="Cotton M."/>
            <person name="Joshu C."/>
            <person name="Antonoiu B."/>
            <person name="Zidanic M."/>
            <person name="Strong C."/>
            <person name="Sun H."/>
            <person name="Lamar B."/>
            <person name="Yordan C."/>
            <person name="Ma P."/>
            <person name="Zhong J."/>
            <person name="Preston R."/>
            <person name="Vil D."/>
            <person name="Shekher M."/>
            <person name="Matero A."/>
            <person name="Shah R."/>
            <person name="Swaby I.K."/>
            <person name="O'Shaughnessy A."/>
            <person name="Rodriguez M."/>
            <person name="Hoffman J."/>
            <person name="Till S."/>
            <person name="Granat S."/>
            <person name="Shohdy N."/>
            <person name="Hasegawa A."/>
            <person name="Hameed A."/>
            <person name="Lodhi M."/>
            <person name="Johnson A."/>
            <person name="Chen E."/>
            <person name="Marra M.A."/>
            <person name="Martienssen R."/>
            <person name="McCombie W.R."/>
        </authorList>
    </citation>
    <scope>NUCLEOTIDE SEQUENCE [LARGE SCALE GENOMIC DNA]</scope>
    <source>
        <strain>cv. Columbia</strain>
    </source>
</reference>
<reference key="3">
    <citation type="journal article" date="2017" name="Plant J.">
        <title>Araport11: a complete reannotation of the Arabidopsis thaliana reference genome.</title>
        <authorList>
            <person name="Cheng C.Y."/>
            <person name="Krishnakumar V."/>
            <person name="Chan A.P."/>
            <person name="Thibaud-Nissen F."/>
            <person name="Schobel S."/>
            <person name="Town C.D."/>
        </authorList>
    </citation>
    <scope>GENOME REANNOTATION</scope>
    <source>
        <strain>cv. Columbia</strain>
    </source>
</reference>
<reference key="4">
    <citation type="journal article" date="2003" name="Science">
        <title>Empirical analysis of transcriptional activity in the Arabidopsis genome.</title>
        <authorList>
            <person name="Yamada K."/>
            <person name="Lim J."/>
            <person name="Dale J.M."/>
            <person name="Chen H."/>
            <person name="Shinn P."/>
            <person name="Palm C.J."/>
            <person name="Southwick A.M."/>
            <person name="Wu H.C."/>
            <person name="Kim C.J."/>
            <person name="Nguyen M."/>
            <person name="Pham P.K."/>
            <person name="Cheuk R.F."/>
            <person name="Karlin-Newmann G."/>
            <person name="Liu S.X."/>
            <person name="Lam B."/>
            <person name="Sakano H."/>
            <person name="Wu T."/>
            <person name="Yu G."/>
            <person name="Miranda M."/>
            <person name="Quach H.L."/>
            <person name="Tripp M."/>
            <person name="Chang C.H."/>
            <person name="Lee J.M."/>
            <person name="Toriumi M.J."/>
            <person name="Chan M.M."/>
            <person name="Tang C.C."/>
            <person name="Onodera C.S."/>
            <person name="Deng J.M."/>
            <person name="Akiyama K."/>
            <person name="Ansari Y."/>
            <person name="Arakawa T."/>
            <person name="Banh J."/>
            <person name="Banno F."/>
            <person name="Bowser L."/>
            <person name="Brooks S.Y."/>
            <person name="Carninci P."/>
            <person name="Chao Q."/>
            <person name="Choy N."/>
            <person name="Enju A."/>
            <person name="Goldsmith A.D."/>
            <person name="Gurjal M."/>
            <person name="Hansen N.F."/>
            <person name="Hayashizaki Y."/>
            <person name="Johnson-Hopson C."/>
            <person name="Hsuan V.W."/>
            <person name="Iida K."/>
            <person name="Karnes M."/>
            <person name="Khan S."/>
            <person name="Koesema E."/>
            <person name="Ishida J."/>
            <person name="Jiang P.X."/>
            <person name="Jones T."/>
            <person name="Kawai J."/>
            <person name="Kamiya A."/>
            <person name="Meyers C."/>
            <person name="Nakajima M."/>
            <person name="Narusaka M."/>
            <person name="Seki M."/>
            <person name="Sakurai T."/>
            <person name="Satou M."/>
            <person name="Tamse R."/>
            <person name="Vaysberg M."/>
            <person name="Wallender E.K."/>
            <person name="Wong C."/>
            <person name="Yamamura Y."/>
            <person name="Yuan S."/>
            <person name="Shinozaki K."/>
            <person name="Davis R.W."/>
            <person name="Theologis A."/>
            <person name="Ecker J.R."/>
        </authorList>
    </citation>
    <scope>NUCLEOTIDE SEQUENCE [LARGE SCALE MRNA]</scope>
    <source>
        <strain>cv. Columbia</strain>
    </source>
</reference>
<proteinExistence type="evidence at transcript level"/>
<evidence type="ECO:0000255" key="1">
    <source>
        <dbReference type="HAMAP-Rule" id="MF_03010"/>
    </source>
</evidence>
<evidence type="ECO:0000255" key="2">
    <source>
        <dbReference type="PROSITE-ProRule" id="PRU01185"/>
    </source>
</evidence>
<name>EIF3K_ARATH</name>
<sequence length="226" mass="25728">MGVEIQSPQEQSSYTVEQLVALNPFNPEILPDLENYVNVTSQTYSLEVNLCLLRLYQFEPERMNTHIVARILVKALMAMPTPDFSLCLFLIPERVQMEEQFKSLIVLSHYLETGRFQQFWDEAAKNRHILEAVPGFEQAIQAYASHLLSLSYQKVPRSVLAEAVNMDGASLDKFIEQQVTNSGWIVEKEGGSIVLPQNEFNHPELKKNTGENVPLEHIARIFPILG</sequence>
<accession>Q9SZA3</accession>